<protein>
    <recommendedName>
        <fullName evidence="1">ATP-dependent Clp protease ATP-binding subunit ClpX</fullName>
    </recommendedName>
</protein>
<keyword id="KW-0067">ATP-binding</keyword>
<keyword id="KW-0143">Chaperone</keyword>
<keyword id="KW-0479">Metal-binding</keyword>
<keyword id="KW-0547">Nucleotide-binding</keyword>
<keyword id="KW-1185">Reference proteome</keyword>
<keyword id="KW-0862">Zinc</keyword>
<sequence length="424" mass="46226">MPEKKGSSGEKILYCSFCGKSQHEVKKLIAGPSVFICDECIELCNDIIRDEVPAVEAGGKTSRSDLPVPSEIKTLLDQYVIGQDAAKRTLSVAVYNHYKRLKHMADKGKGEEVELAKSNILLIGPTGSGKTLLAQTLARMLNVPFVIADATTLTEAGYVGEDVENIIQKLLQNCNYEVERAQRGIVYIDEIDKISRKADNPSITRDVSGEGVQQALLKLVEGTMASVPPQGGRKHPNQDFLQIDTTNILFICGGAFDGLEKVIANRSEKSGIGFGATVKSKAERSVSEVFRQIEPEDLIKFGIIPELVGRLPVIATLGELTEDALVQILTEPKNALLKQYQRLFGMDGVELEIRPSGLAAIAQKALKRKTGARGLRSIVEQALMDTMFELPAMDGVAKVVVDENTIEDNTMPLLVYREQAKASA</sequence>
<gene>
    <name evidence="1" type="primary">clpX</name>
    <name type="ordered locus">Lcho_2543</name>
</gene>
<accession>B1Y6H2</accession>
<comment type="function">
    <text evidence="1">ATP-dependent specificity component of the Clp protease. It directs the protease to specific substrates. Can perform chaperone functions in the absence of ClpP.</text>
</comment>
<comment type="subunit">
    <text evidence="1">Component of the ClpX-ClpP complex. Forms a hexameric ring that, in the presence of ATP, binds to fourteen ClpP subunits assembled into a disk-like structure with a central cavity, resembling the structure of eukaryotic proteasomes.</text>
</comment>
<comment type="similarity">
    <text evidence="1">Belongs to the ClpX chaperone family.</text>
</comment>
<name>CLPX_LEPCP</name>
<feature type="chain" id="PRO_1000097964" description="ATP-dependent Clp protease ATP-binding subunit ClpX">
    <location>
        <begin position="1"/>
        <end position="424"/>
    </location>
</feature>
<feature type="domain" description="ClpX-type ZB" evidence="2">
    <location>
        <begin position="3"/>
        <end position="56"/>
    </location>
</feature>
<feature type="binding site" evidence="2">
    <location>
        <position position="15"/>
    </location>
    <ligand>
        <name>Zn(2+)</name>
        <dbReference type="ChEBI" id="CHEBI:29105"/>
    </ligand>
</feature>
<feature type="binding site" evidence="2">
    <location>
        <position position="18"/>
    </location>
    <ligand>
        <name>Zn(2+)</name>
        <dbReference type="ChEBI" id="CHEBI:29105"/>
    </ligand>
</feature>
<feature type="binding site" evidence="2">
    <location>
        <position position="37"/>
    </location>
    <ligand>
        <name>Zn(2+)</name>
        <dbReference type="ChEBI" id="CHEBI:29105"/>
    </ligand>
</feature>
<feature type="binding site" evidence="2">
    <location>
        <position position="40"/>
    </location>
    <ligand>
        <name>Zn(2+)</name>
        <dbReference type="ChEBI" id="CHEBI:29105"/>
    </ligand>
</feature>
<feature type="binding site" evidence="1">
    <location>
        <begin position="125"/>
        <end position="132"/>
    </location>
    <ligand>
        <name>ATP</name>
        <dbReference type="ChEBI" id="CHEBI:30616"/>
    </ligand>
</feature>
<organism>
    <name type="scientific">Leptothrix cholodnii (strain ATCC 51168 / LMG 8142 / SP-6)</name>
    <name type="common">Leptothrix discophora (strain SP-6)</name>
    <dbReference type="NCBI Taxonomy" id="395495"/>
    <lineage>
        <taxon>Bacteria</taxon>
        <taxon>Pseudomonadati</taxon>
        <taxon>Pseudomonadota</taxon>
        <taxon>Betaproteobacteria</taxon>
        <taxon>Burkholderiales</taxon>
        <taxon>Sphaerotilaceae</taxon>
        <taxon>Leptothrix</taxon>
    </lineage>
</organism>
<reference key="1">
    <citation type="submission" date="2008-03" db="EMBL/GenBank/DDBJ databases">
        <title>Complete sequence of Leptothrix cholodnii SP-6.</title>
        <authorList>
            <consortium name="US DOE Joint Genome Institute"/>
            <person name="Copeland A."/>
            <person name="Lucas S."/>
            <person name="Lapidus A."/>
            <person name="Glavina del Rio T."/>
            <person name="Dalin E."/>
            <person name="Tice H."/>
            <person name="Bruce D."/>
            <person name="Goodwin L."/>
            <person name="Pitluck S."/>
            <person name="Chertkov O."/>
            <person name="Brettin T."/>
            <person name="Detter J.C."/>
            <person name="Han C."/>
            <person name="Kuske C.R."/>
            <person name="Schmutz J."/>
            <person name="Larimer F."/>
            <person name="Land M."/>
            <person name="Hauser L."/>
            <person name="Kyrpides N."/>
            <person name="Lykidis A."/>
            <person name="Emerson D."/>
            <person name="Richardson P."/>
        </authorList>
    </citation>
    <scope>NUCLEOTIDE SEQUENCE [LARGE SCALE GENOMIC DNA]</scope>
    <source>
        <strain>ATCC 51168 / LMG 8142 / SP-6</strain>
    </source>
</reference>
<proteinExistence type="inferred from homology"/>
<dbReference type="EMBL" id="CP001013">
    <property type="protein sequence ID" value="ACB34808.1"/>
    <property type="molecule type" value="Genomic_DNA"/>
</dbReference>
<dbReference type="RefSeq" id="WP_012347564.1">
    <property type="nucleotide sequence ID" value="NC_010524.1"/>
</dbReference>
<dbReference type="SMR" id="B1Y6H2"/>
<dbReference type="STRING" id="395495.Lcho_2543"/>
<dbReference type="KEGG" id="lch:Lcho_2543"/>
<dbReference type="eggNOG" id="COG1219">
    <property type="taxonomic scope" value="Bacteria"/>
</dbReference>
<dbReference type="HOGENOM" id="CLU_014218_8_2_4"/>
<dbReference type="OrthoDB" id="9804062at2"/>
<dbReference type="Proteomes" id="UP000001693">
    <property type="component" value="Chromosome"/>
</dbReference>
<dbReference type="GO" id="GO:0009376">
    <property type="term" value="C:HslUV protease complex"/>
    <property type="evidence" value="ECO:0007669"/>
    <property type="project" value="TreeGrafter"/>
</dbReference>
<dbReference type="GO" id="GO:0005524">
    <property type="term" value="F:ATP binding"/>
    <property type="evidence" value="ECO:0007669"/>
    <property type="project" value="UniProtKB-UniRule"/>
</dbReference>
<dbReference type="GO" id="GO:0016887">
    <property type="term" value="F:ATP hydrolysis activity"/>
    <property type="evidence" value="ECO:0007669"/>
    <property type="project" value="InterPro"/>
</dbReference>
<dbReference type="GO" id="GO:0140662">
    <property type="term" value="F:ATP-dependent protein folding chaperone"/>
    <property type="evidence" value="ECO:0007669"/>
    <property type="project" value="InterPro"/>
</dbReference>
<dbReference type="GO" id="GO:0046983">
    <property type="term" value="F:protein dimerization activity"/>
    <property type="evidence" value="ECO:0007669"/>
    <property type="project" value="InterPro"/>
</dbReference>
<dbReference type="GO" id="GO:0051082">
    <property type="term" value="F:unfolded protein binding"/>
    <property type="evidence" value="ECO:0007669"/>
    <property type="project" value="UniProtKB-UniRule"/>
</dbReference>
<dbReference type="GO" id="GO:0008270">
    <property type="term" value="F:zinc ion binding"/>
    <property type="evidence" value="ECO:0007669"/>
    <property type="project" value="InterPro"/>
</dbReference>
<dbReference type="GO" id="GO:0051301">
    <property type="term" value="P:cell division"/>
    <property type="evidence" value="ECO:0007669"/>
    <property type="project" value="TreeGrafter"/>
</dbReference>
<dbReference type="GO" id="GO:0051603">
    <property type="term" value="P:proteolysis involved in protein catabolic process"/>
    <property type="evidence" value="ECO:0007669"/>
    <property type="project" value="TreeGrafter"/>
</dbReference>
<dbReference type="CDD" id="cd19497">
    <property type="entry name" value="RecA-like_ClpX"/>
    <property type="match status" value="1"/>
</dbReference>
<dbReference type="FunFam" id="1.10.8.60:FF:000002">
    <property type="entry name" value="ATP-dependent Clp protease ATP-binding subunit ClpX"/>
    <property type="match status" value="1"/>
</dbReference>
<dbReference type="FunFam" id="3.40.50.300:FF:000005">
    <property type="entry name" value="ATP-dependent Clp protease ATP-binding subunit ClpX"/>
    <property type="match status" value="1"/>
</dbReference>
<dbReference type="Gene3D" id="1.10.8.60">
    <property type="match status" value="1"/>
</dbReference>
<dbReference type="Gene3D" id="6.20.220.10">
    <property type="entry name" value="ClpX chaperone, C4-type zinc finger domain"/>
    <property type="match status" value="1"/>
</dbReference>
<dbReference type="Gene3D" id="3.40.50.300">
    <property type="entry name" value="P-loop containing nucleotide triphosphate hydrolases"/>
    <property type="match status" value="1"/>
</dbReference>
<dbReference type="HAMAP" id="MF_00175">
    <property type="entry name" value="ClpX"/>
    <property type="match status" value="1"/>
</dbReference>
<dbReference type="InterPro" id="IPR003593">
    <property type="entry name" value="AAA+_ATPase"/>
</dbReference>
<dbReference type="InterPro" id="IPR050052">
    <property type="entry name" value="ATP-dep_Clp_protease_ClpX"/>
</dbReference>
<dbReference type="InterPro" id="IPR003959">
    <property type="entry name" value="ATPase_AAA_core"/>
</dbReference>
<dbReference type="InterPro" id="IPR019489">
    <property type="entry name" value="Clp_ATPase_C"/>
</dbReference>
<dbReference type="InterPro" id="IPR004487">
    <property type="entry name" value="Clp_protease_ATP-bd_su_ClpX"/>
</dbReference>
<dbReference type="InterPro" id="IPR046425">
    <property type="entry name" value="ClpX_bact"/>
</dbReference>
<dbReference type="InterPro" id="IPR027417">
    <property type="entry name" value="P-loop_NTPase"/>
</dbReference>
<dbReference type="InterPro" id="IPR010603">
    <property type="entry name" value="Znf_CppX_C4"/>
</dbReference>
<dbReference type="InterPro" id="IPR038366">
    <property type="entry name" value="Znf_CppX_C4_sf"/>
</dbReference>
<dbReference type="NCBIfam" id="TIGR00382">
    <property type="entry name" value="clpX"/>
    <property type="match status" value="1"/>
</dbReference>
<dbReference type="NCBIfam" id="NF003745">
    <property type="entry name" value="PRK05342.1"/>
    <property type="match status" value="1"/>
</dbReference>
<dbReference type="PANTHER" id="PTHR48102:SF7">
    <property type="entry name" value="ATP-DEPENDENT CLP PROTEASE ATP-BINDING SUBUNIT CLPX-LIKE, MITOCHONDRIAL"/>
    <property type="match status" value="1"/>
</dbReference>
<dbReference type="PANTHER" id="PTHR48102">
    <property type="entry name" value="ATP-DEPENDENT CLP PROTEASE ATP-BINDING SUBUNIT CLPX-LIKE, MITOCHONDRIAL-RELATED"/>
    <property type="match status" value="1"/>
</dbReference>
<dbReference type="Pfam" id="PF07724">
    <property type="entry name" value="AAA_2"/>
    <property type="match status" value="1"/>
</dbReference>
<dbReference type="Pfam" id="PF10431">
    <property type="entry name" value="ClpB_D2-small"/>
    <property type="match status" value="1"/>
</dbReference>
<dbReference type="Pfam" id="PF06689">
    <property type="entry name" value="zf-C4_ClpX"/>
    <property type="match status" value="1"/>
</dbReference>
<dbReference type="SMART" id="SM00382">
    <property type="entry name" value="AAA"/>
    <property type="match status" value="1"/>
</dbReference>
<dbReference type="SMART" id="SM01086">
    <property type="entry name" value="ClpB_D2-small"/>
    <property type="match status" value="1"/>
</dbReference>
<dbReference type="SMART" id="SM00994">
    <property type="entry name" value="zf-C4_ClpX"/>
    <property type="match status" value="1"/>
</dbReference>
<dbReference type="SUPFAM" id="SSF57716">
    <property type="entry name" value="Glucocorticoid receptor-like (DNA-binding domain)"/>
    <property type="match status" value="1"/>
</dbReference>
<dbReference type="SUPFAM" id="SSF52540">
    <property type="entry name" value="P-loop containing nucleoside triphosphate hydrolases"/>
    <property type="match status" value="1"/>
</dbReference>
<dbReference type="PROSITE" id="PS51902">
    <property type="entry name" value="CLPX_ZB"/>
    <property type="match status" value="1"/>
</dbReference>
<evidence type="ECO:0000255" key="1">
    <source>
        <dbReference type="HAMAP-Rule" id="MF_00175"/>
    </source>
</evidence>
<evidence type="ECO:0000255" key="2">
    <source>
        <dbReference type="PROSITE-ProRule" id="PRU01250"/>
    </source>
</evidence>